<comment type="function">
    <text evidence="1">Produces ATP from ADP in the presence of a proton gradient across the membrane. The alpha chain is a regulatory subunit.</text>
</comment>
<comment type="catalytic activity">
    <reaction evidence="1">
        <text>ATP + H2O + 4 H(+)(in) = ADP + phosphate + 5 H(+)(out)</text>
        <dbReference type="Rhea" id="RHEA:57720"/>
        <dbReference type="ChEBI" id="CHEBI:15377"/>
        <dbReference type="ChEBI" id="CHEBI:15378"/>
        <dbReference type="ChEBI" id="CHEBI:30616"/>
        <dbReference type="ChEBI" id="CHEBI:43474"/>
        <dbReference type="ChEBI" id="CHEBI:456216"/>
        <dbReference type="EC" id="7.1.2.2"/>
    </reaction>
</comment>
<comment type="subunit">
    <text evidence="1">F-type ATPases have 2 components, CF(1) - the catalytic core - and CF(0) - the membrane proton channel. CF(1) has five subunits: alpha(3), beta(3), gamma(1), delta(1), epsilon(1). CF(0) has three main subunits: a(1), b(2) and c(9-12). The alpha and beta chains form an alternating ring which encloses part of the gamma chain. CF(1) is attached to CF(0) by a central stalk formed by the gamma and epsilon chains, while a peripheral stalk is formed by the delta and b chains.</text>
</comment>
<comment type="subcellular location">
    <subcellularLocation>
        <location evidence="1">Cell membrane</location>
        <topology evidence="1">Peripheral membrane protein</topology>
    </subcellularLocation>
</comment>
<comment type="similarity">
    <text evidence="1">Belongs to the ATPase alpha/beta chains family.</text>
</comment>
<dbReference type="EC" id="7.1.2.2" evidence="1"/>
<dbReference type="EMBL" id="LT708304">
    <property type="protein sequence ID" value="SIT99943.1"/>
    <property type="molecule type" value="Genomic_DNA"/>
</dbReference>
<dbReference type="RefSeq" id="NP_854994.1">
    <property type="nucleotide sequence ID" value="NC_002945.3"/>
</dbReference>
<dbReference type="RefSeq" id="WP_003406699.1">
    <property type="nucleotide sequence ID" value="NC_002945.4"/>
</dbReference>
<dbReference type="SMR" id="P63674"/>
<dbReference type="KEGG" id="mbo:BQ2027_MB1340"/>
<dbReference type="PATRIC" id="fig|233413.5.peg.1469"/>
<dbReference type="Proteomes" id="UP000001419">
    <property type="component" value="Chromosome"/>
</dbReference>
<dbReference type="GO" id="GO:0005886">
    <property type="term" value="C:plasma membrane"/>
    <property type="evidence" value="ECO:0007669"/>
    <property type="project" value="UniProtKB-SubCell"/>
</dbReference>
<dbReference type="GO" id="GO:0045259">
    <property type="term" value="C:proton-transporting ATP synthase complex"/>
    <property type="evidence" value="ECO:0007669"/>
    <property type="project" value="UniProtKB-KW"/>
</dbReference>
<dbReference type="GO" id="GO:0043531">
    <property type="term" value="F:ADP binding"/>
    <property type="evidence" value="ECO:0007669"/>
    <property type="project" value="TreeGrafter"/>
</dbReference>
<dbReference type="GO" id="GO:0005524">
    <property type="term" value="F:ATP binding"/>
    <property type="evidence" value="ECO:0007669"/>
    <property type="project" value="UniProtKB-UniRule"/>
</dbReference>
<dbReference type="GO" id="GO:0046933">
    <property type="term" value="F:proton-transporting ATP synthase activity, rotational mechanism"/>
    <property type="evidence" value="ECO:0007669"/>
    <property type="project" value="UniProtKB-UniRule"/>
</dbReference>
<dbReference type="CDD" id="cd18113">
    <property type="entry name" value="ATP-synt_F1_alpha_C"/>
    <property type="match status" value="1"/>
</dbReference>
<dbReference type="CDD" id="cd18116">
    <property type="entry name" value="ATP-synt_F1_alpha_N"/>
    <property type="match status" value="1"/>
</dbReference>
<dbReference type="CDD" id="cd01132">
    <property type="entry name" value="F1-ATPase_alpha_CD"/>
    <property type="match status" value="1"/>
</dbReference>
<dbReference type="FunFam" id="1.20.150.20:FF:000001">
    <property type="entry name" value="ATP synthase subunit alpha"/>
    <property type="match status" value="1"/>
</dbReference>
<dbReference type="FunFam" id="2.40.30.20:FF:000001">
    <property type="entry name" value="ATP synthase subunit alpha"/>
    <property type="match status" value="1"/>
</dbReference>
<dbReference type="FunFam" id="3.40.50.300:FF:000002">
    <property type="entry name" value="ATP synthase subunit alpha"/>
    <property type="match status" value="1"/>
</dbReference>
<dbReference type="Gene3D" id="2.40.30.20">
    <property type="match status" value="1"/>
</dbReference>
<dbReference type="Gene3D" id="1.20.150.20">
    <property type="entry name" value="ATP synthase alpha/beta chain, C-terminal domain"/>
    <property type="match status" value="1"/>
</dbReference>
<dbReference type="Gene3D" id="3.40.50.300">
    <property type="entry name" value="P-loop containing nucleotide triphosphate hydrolases"/>
    <property type="match status" value="1"/>
</dbReference>
<dbReference type="HAMAP" id="MF_01346">
    <property type="entry name" value="ATP_synth_alpha_bact"/>
    <property type="match status" value="1"/>
</dbReference>
<dbReference type="InterPro" id="IPR023366">
    <property type="entry name" value="ATP_synth_asu-like_sf"/>
</dbReference>
<dbReference type="InterPro" id="IPR000793">
    <property type="entry name" value="ATP_synth_asu_C"/>
</dbReference>
<dbReference type="InterPro" id="IPR038376">
    <property type="entry name" value="ATP_synth_asu_C_sf"/>
</dbReference>
<dbReference type="InterPro" id="IPR033732">
    <property type="entry name" value="ATP_synth_F1_a_nt-bd_dom"/>
</dbReference>
<dbReference type="InterPro" id="IPR005294">
    <property type="entry name" value="ATP_synth_F1_asu"/>
</dbReference>
<dbReference type="InterPro" id="IPR020003">
    <property type="entry name" value="ATPase_a/bsu_AS"/>
</dbReference>
<dbReference type="InterPro" id="IPR004100">
    <property type="entry name" value="ATPase_F1/V1/A1_a/bsu_N"/>
</dbReference>
<dbReference type="InterPro" id="IPR036121">
    <property type="entry name" value="ATPase_F1/V1/A1_a/bsu_N_sf"/>
</dbReference>
<dbReference type="InterPro" id="IPR000194">
    <property type="entry name" value="ATPase_F1/V1/A1_a/bsu_nucl-bd"/>
</dbReference>
<dbReference type="InterPro" id="IPR027417">
    <property type="entry name" value="P-loop_NTPase"/>
</dbReference>
<dbReference type="NCBIfam" id="TIGR00962">
    <property type="entry name" value="atpA"/>
    <property type="match status" value="1"/>
</dbReference>
<dbReference type="NCBIfam" id="NF009884">
    <property type="entry name" value="PRK13343.1"/>
    <property type="match status" value="1"/>
</dbReference>
<dbReference type="PANTHER" id="PTHR48082">
    <property type="entry name" value="ATP SYNTHASE SUBUNIT ALPHA, MITOCHONDRIAL"/>
    <property type="match status" value="1"/>
</dbReference>
<dbReference type="PANTHER" id="PTHR48082:SF2">
    <property type="entry name" value="ATP SYNTHASE SUBUNIT ALPHA, MITOCHONDRIAL"/>
    <property type="match status" value="1"/>
</dbReference>
<dbReference type="Pfam" id="PF00006">
    <property type="entry name" value="ATP-synt_ab"/>
    <property type="match status" value="1"/>
</dbReference>
<dbReference type="Pfam" id="PF00306">
    <property type="entry name" value="ATP-synt_ab_C"/>
    <property type="match status" value="1"/>
</dbReference>
<dbReference type="Pfam" id="PF02874">
    <property type="entry name" value="ATP-synt_ab_N"/>
    <property type="match status" value="1"/>
</dbReference>
<dbReference type="PIRSF" id="PIRSF039088">
    <property type="entry name" value="F_ATPase_subunit_alpha"/>
    <property type="match status" value="1"/>
</dbReference>
<dbReference type="SUPFAM" id="SSF47917">
    <property type="entry name" value="C-terminal domain of alpha and beta subunits of F1 ATP synthase"/>
    <property type="match status" value="1"/>
</dbReference>
<dbReference type="SUPFAM" id="SSF50615">
    <property type="entry name" value="N-terminal domain of alpha and beta subunits of F1 ATP synthase"/>
    <property type="match status" value="1"/>
</dbReference>
<dbReference type="SUPFAM" id="SSF52540">
    <property type="entry name" value="P-loop containing nucleoside triphosphate hydrolases"/>
    <property type="match status" value="1"/>
</dbReference>
<dbReference type="PROSITE" id="PS00152">
    <property type="entry name" value="ATPASE_ALPHA_BETA"/>
    <property type="match status" value="1"/>
</dbReference>
<feature type="chain" id="PRO_0000144340" description="ATP synthase subunit alpha">
    <location>
        <begin position="1"/>
        <end position="549"/>
    </location>
</feature>
<feature type="binding site" evidence="1">
    <location>
        <begin position="172"/>
        <end position="179"/>
    </location>
    <ligand>
        <name>ATP</name>
        <dbReference type="ChEBI" id="CHEBI:30616"/>
    </ligand>
</feature>
<feature type="site" description="Required for activity">
    <location>
        <position position="373"/>
    </location>
</feature>
<evidence type="ECO:0000255" key="1">
    <source>
        <dbReference type="HAMAP-Rule" id="MF_01346"/>
    </source>
</evidence>
<name>ATPA_MYCBO</name>
<protein>
    <recommendedName>
        <fullName evidence="1">ATP synthase subunit alpha</fullName>
        <ecNumber evidence="1">7.1.2.2</ecNumber>
    </recommendedName>
    <alternativeName>
        <fullName evidence="1">ATP synthase F1 sector subunit alpha</fullName>
    </alternativeName>
    <alternativeName>
        <fullName evidence="1">F-ATPase subunit alpha</fullName>
    </alternativeName>
</protein>
<organism>
    <name type="scientific">Mycobacterium bovis (strain ATCC BAA-935 / AF2122/97)</name>
    <dbReference type="NCBI Taxonomy" id="233413"/>
    <lineage>
        <taxon>Bacteria</taxon>
        <taxon>Bacillati</taxon>
        <taxon>Actinomycetota</taxon>
        <taxon>Actinomycetes</taxon>
        <taxon>Mycobacteriales</taxon>
        <taxon>Mycobacteriaceae</taxon>
        <taxon>Mycobacterium</taxon>
        <taxon>Mycobacterium tuberculosis complex</taxon>
    </lineage>
</organism>
<reference key="1">
    <citation type="journal article" date="2003" name="Proc. Natl. Acad. Sci. U.S.A.">
        <title>The complete genome sequence of Mycobacterium bovis.</title>
        <authorList>
            <person name="Garnier T."/>
            <person name="Eiglmeier K."/>
            <person name="Camus J.-C."/>
            <person name="Medina N."/>
            <person name="Mansoor H."/>
            <person name="Pryor M."/>
            <person name="Duthoy S."/>
            <person name="Grondin S."/>
            <person name="Lacroix C."/>
            <person name="Monsempe C."/>
            <person name="Simon S."/>
            <person name="Harris B."/>
            <person name="Atkin R."/>
            <person name="Doggett J."/>
            <person name="Mayes R."/>
            <person name="Keating L."/>
            <person name="Wheeler P.R."/>
            <person name="Parkhill J."/>
            <person name="Barrell B.G."/>
            <person name="Cole S.T."/>
            <person name="Gordon S.V."/>
            <person name="Hewinson R.G."/>
        </authorList>
    </citation>
    <scope>NUCLEOTIDE SEQUENCE [LARGE SCALE GENOMIC DNA]</scope>
    <source>
        <strain>ATCC BAA-935 / AF2122/97</strain>
    </source>
</reference>
<reference key="2">
    <citation type="journal article" date="2017" name="Genome Announc.">
        <title>Updated reference genome sequence and annotation of Mycobacterium bovis AF2122/97.</title>
        <authorList>
            <person name="Malone K.M."/>
            <person name="Farrell D."/>
            <person name="Stuber T.P."/>
            <person name="Schubert O.T."/>
            <person name="Aebersold R."/>
            <person name="Robbe-Austerman S."/>
            <person name="Gordon S.V."/>
        </authorList>
    </citation>
    <scope>NUCLEOTIDE SEQUENCE [LARGE SCALE GENOMIC DNA]</scope>
    <scope>GENOME REANNOTATION</scope>
    <source>
        <strain>ATCC BAA-935 / AF2122/97</strain>
    </source>
</reference>
<proteinExistence type="inferred from homology"/>
<accession>P63674</accession>
<accession>A0A1R3XYX9</accession>
<accession>Q10592</accession>
<accession>X2BHC1</accession>
<gene>
    <name evidence="1" type="primary">atpA</name>
    <name type="ordered locus">BQ2027_MB1340</name>
</gene>
<keyword id="KW-0066">ATP synthesis</keyword>
<keyword id="KW-0067">ATP-binding</keyword>
<keyword id="KW-1003">Cell membrane</keyword>
<keyword id="KW-0139">CF(1)</keyword>
<keyword id="KW-0375">Hydrogen ion transport</keyword>
<keyword id="KW-0406">Ion transport</keyword>
<keyword id="KW-0472">Membrane</keyword>
<keyword id="KW-0547">Nucleotide-binding</keyword>
<keyword id="KW-1185">Reference proteome</keyword>
<keyword id="KW-1278">Translocase</keyword>
<keyword id="KW-0813">Transport</keyword>
<sequence length="549" mass="59288">MAELTIPADDIQSAIEEYVSSFTADTSREEVGTVVDAGDGIAHVEGLPSVMTQELLEFPGGILGVALNLDEHSVGAVILGDFENIEEGQQVKRTGEVLSVPVGDGFLGRVVNPLGQPIDGRGDVDSDTRRALELQAPSVVHRQGVKEPLQTGIKAIDAMTPIGRGQRQLIIGDRKTGKTAVCVDTILNQRQNWESGDPKKQVRCVYVAIGQKGTTIAAVRRTLEEGGAMDYTTIVAAAASESAGFKWLAPYTGSAIAQHWMYEGKHVLIIFDDLTKQAEAYRAISLLLRRPPGREAYPGDVFYLHSRLLERCAKLSDDLGGGSLTGLPIIETKANDISAYIPTNVISITDGQCFLETDLFNQGVRPAINVGVSVSRVGGAAQIKAMKEVAGSLRLDLSQYRELEAFAAFASDLDAASKAQLERGARLVELLKQPQSQPMPVEEQVVSIFLGTGGHLDSVPVEDVRRFETELLDHMRASEEEILTEIRDSQKLTEEAADKLTEVIKNFKKGFAATGGGSVVPDEHVEALDEDKLAKEAVKVKKPAPKKKK</sequence>